<organism>
    <name type="scientific">Yersinia pestis (strain Pestoides F)</name>
    <dbReference type="NCBI Taxonomy" id="386656"/>
    <lineage>
        <taxon>Bacteria</taxon>
        <taxon>Pseudomonadati</taxon>
        <taxon>Pseudomonadota</taxon>
        <taxon>Gammaproteobacteria</taxon>
        <taxon>Enterobacterales</taxon>
        <taxon>Yersiniaceae</taxon>
        <taxon>Yersinia</taxon>
    </lineage>
</organism>
<proteinExistence type="inferred from homology"/>
<accession>A4TKX8</accession>
<dbReference type="EC" id="3.1.26.3" evidence="1"/>
<dbReference type="EMBL" id="CP000668">
    <property type="protein sequence ID" value="ABP39940.1"/>
    <property type="molecule type" value="Genomic_DNA"/>
</dbReference>
<dbReference type="RefSeq" id="WP_002209679.1">
    <property type="nucleotide sequence ID" value="NZ_CP009715.1"/>
</dbReference>
<dbReference type="SMR" id="A4TKX8"/>
<dbReference type="GeneID" id="57975973"/>
<dbReference type="KEGG" id="ypp:YPDSF_1553"/>
<dbReference type="PATRIC" id="fig|386656.14.peg.2218"/>
<dbReference type="GO" id="GO:0005737">
    <property type="term" value="C:cytoplasm"/>
    <property type="evidence" value="ECO:0007669"/>
    <property type="project" value="UniProtKB-SubCell"/>
</dbReference>
<dbReference type="GO" id="GO:0003725">
    <property type="term" value="F:double-stranded RNA binding"/>
    <property type="evidence" value="ECO:0007669"/>
    <property type="project" value="TreeGrafter"/>
</dbReference>
<dbReference type="GO" id="GO:0046872">
    <property type="term" value="F:metal ion binding"/>
    <property type="evidence" value="ECO:0007669"/>
    <property type="project" value="UniProtKB-KW"/>
</dbReference>
<dbReference type="GO" id="GO:0004525">
    <property type="term" value="F:ribonuclease III activity"/>
    <property type="evidence" value="ECO:0007669"/>
    <property type="project" value="UniProtKB-UniRule"/>
</dbReference>
<dbReference type="GO" id="GO:0019843">
    <property type="term" value="F:rRNA binding"/>
    <property type="evidence" value="ECO:0007669"/>
    <property type="project" value="UniProtKB-KW"/>
</dbReference>
<dbReference type="GO" id="GO:0006397">
    <property type="term" value="P:mRNA processing"/>
    <property type="evidence" value="ECO:0007669"/>
    <property type="project" value="UniProtKB-UniRule"/>
</dbReference>
<dbReference type="GO" id="GO:0010468">
    <property type="term" value="P:regulation of gene expression"/>
    <property type="evidence" value="ECO:0007669"/>
    <property type="project" value="TreeGrafter"/>
</dbReference>
<dbReference type="GO" id="GO:0006364">
    <property type="term" value="P:rRNA processing"/>
    <property type="evidence" value="ECO:0007669"/>
    <property type="project" value="UniProtKB-UniRule"/>
</dbReference>
<dbReference type="GO" id="GO:0008033">
    <property type="term" value="P:tRNA processing"/>
    <property type="evidence" value="ECO:0007669"/>
    <property type="project" value="UniProtKB-KW"/>
</dbReference>
<dbReference type="CDD" id="cd10845">
    <property type="entry name" value="DSRM_RNAse_III_family"/>
    <property type="match status" value="1"/>
</dbReference>
<dbReference type="CDD" id="cd00593">
    <property type="entry name" value="RIBOc"/>
    <property type="match status" value="1"/>
</dbReference>
<dbReference type="FunFam" id="1.10.1520.10:FF:000001">
    <property type="entry name" value="Ribonuclease 3"/>
    <property type="match status" value="1"/>
</dbReference>
<dbReference type="FunFam" id="3.30.160.20:FF:000003">
    <property type="entry name" value="Ribonuclease 3"/>
    <property type="match status" value="1"/>
</dbReference>
<dbReference type="Gene3D" id="3.30.160.20">
    <property type="match status" value="1"/>
</dbReference>
<dbReference type="Gene3D" id="1.10.1520.10">
    <property type="entry name" value="Ribonuclease III domain"/>
    <property type="match status" value="1"/>
</dbReference>
<dbReference type="HAMAP" id="MF_00104">
    <property type="entry name" value="RNase_III"/>
    <property type="match status" value="1"/>
</dbReference>
<dbReference type="InterPro" id="IPR014720">
    <property type="entry name" value="dsRBD_dom"/>
</dbReference>
<dbReference type="InterPro" id="IPR011907">
    <property type="entry name" value="RNase_III"/>
</dbReference>
<dbReference type="InterPro" id="IPR000999">
    <property type="entry name" value="RNase_III_dom"/>
</dbReference>
<dbReference type="InterPro" id="IPR036389">
    <property type="entry name" value="RNase_III_sf"/>
</dbReference>
<dbReference type="NCBIfam" id="TIGR02191">
    <property type="entry name" value="RNaseIII"/>
    <property type="match status" value="1"/>
</dbReference>
<dbReference type="PANTHER" id="PTHR11207:SF0">
    <property type="entry name" value="RIBONUCLEASE 3"/>
    <property type="match status" value="1"/>
</dbReference>
<dbReference type="PANTHER" id="PTHR11207">
    <property type="entry name" value="RIBONUCLEASE III"/>
    <property type="match status" value="1"/>
</dbReference>
<dbReference type="Pfam" id="PF00035">
    <property type="entry name" value="dsrm"/>
    <property type="match status" value="1"/>
</dbReference>
<dbReference type="Pfam" id="PF14622">
    <property type="entry name" value="Ribonucleas_3_3"/>
    <property type="match status" value="1"/>
</dbReference>
<dbReference type="SMART" id="SM00358">
    <property type="entry name" value="DSRM"/>
    <property type="match status" value="1"/>
</dbReference>
<dbReference type="SMART" id="SM00535">
    <property type="entry name" value="RIBOc"/>
    <property type="match status" value="1"/>
</dbReference>
<dbReference type="SUPFAM" id="SSF54768">
    <property type="entry name" value="dsRNA-binding domain-like"/>
    <property type="match status" value="1"/>
</dbReference>
<dbReference type="SUPFAM" id="SSF69065">
    <property type="entry name" value="RNase III domain-like"/>
    <property type="match status" value="1"/>
</dbReference>
<dbReference type="PROSITE" id="PS50137">
    <property type="entry name" value="DS_RBD"/>
    <property type="match status" value="1"/>
</dbReference>
<dbReference type="PROSITE" id="PS00517">
    <property type="entry name" value="RNASE_3_1"/>
    <property type="match status" value="1"/>
</dbReference>
<dbReference type="PROSITE" id="PS50142">
    <property type="entry name" value="RNASE_3_2"/>
    <property type="match status" value="1"/>
</dbReference>
<sequence>MNPIVINRLQRKLGYTFQQQELLLQALTHRSASSKHNERLEFLGDSILSFVIANELYRRFPRVDEGDMSRMRATLVRGNTLAEMAREFDLGECLRLGPGELKSGGFRRESILADTVEALIGGVFLDSDIHTIERLILEWYHSRLEEISPGDKQKDPKTRLQEYLQGRHLPLPSYLVVQVRGEAHDQEFTIHCQVSGLNEPVIGTGSSRRKAEQAAAEQALKQLELE</sequence>
<reference key="1">
    <citation type="submission" date="2007-02" db="EMBL/GenBank/DDBJ databases">
        <title>Complete sequence of chromosome of Yersinia pestis Pestoides F.</title>
        <authorList>
            <consortium name="US DOE Joint Genome Institute"/>
            <person name="Copeland A."/>
            <person name="Lucas S."/>
            <person name="Lapidus A."/>
            <person name="Barry K."/>
            <person name="Detter J.C."/>
            <person name="Glavina del Rio T."/>
            <person name="Hammon N."/>
            <person name="Israni S."/>
            <person name="Dalin E."/>
            <person name="Tice H."/>
            <person name="Pitluck S."/>
            <person name="Di Bartolo G."/>
            <person name="Chain P."/>
            <person name="Malfatti S."/>
            <person name="Shin M."/>
            <person name="Vergez L."/>
            <person name="Schmutz J."/>
            <person name="Larimer F."/>
            <person name="Land M."/>
            <person name="Hauser L."/>
            <person name="Worsham P."/>
            <person name="Chu M."/>
            <person name="Bearden S."/>
            <person name="Garcia E."/>
            <person name="Richardson P."/>
        </authorList>
    </citation>
    <scope>NUCLEOTIDE SEQUENCE [LARGE SCALE GENOMIC DNA]</scope>
    <source>
        <strain>Pestoides F</strain>
    </source>
</reference>
<evidence type="ECO:0000255" key="1">
    <source>
        <dbReference type="HAMAP-Rule" id="MF_00104"/>
    </source>
</evidence>
<protein>
    <recommendedName>
        <fullName evidence="1">Ribonuclease 3</fullName>
        <ecNumber evidence="1">3.1.26.3</ecNumber>
    </recommendedName>
    <alternativeName>
        <fullName evidence="1">Ribonuclease III</fullName>
        <shortName evidence="1">RNase III</shortName>
    </alternativeName>
</protein>
<name>RNC_YERPP</name>
<keyword id="KW-0963">Cytoplasm</keyword>
<keyword id="KW-0255">Endonuclease</keyword>
<keyword id="KW-0378">Hydrolase</keyword>
<keyword id="KW-0460">Magnesium</keyword>
<keyword id="KW-0479">Metal-binding</keyword>
<keyword id="KW-0507">mRNA processing</keyword>
<keyword id="KW-0540">Nuclease</keyword>
<keyword id="KW-0694">RNA-binding</keyword>
<keyword id="KW-0698">rRNA processing</keyword>
<keyword id="KW-0699">rRNA-binding</keyword>
<keyword id="KW-0819">tRNA processing</keyword>
<feature type="chain" id="PRO_1000075854" description="Ribonuclease 3">
    <location>
        <begin position="1"/>
        <end position="226"/>
    </location>
</feature>
<feature type="domain" description="RNase III" evidence="1">
    <location>
        <begin position="6"/>
        <end position="128"/>
    </location>
</feature>
<feature type="domain" description="DRBM" evidence="1">
    <location>
        <begin position="155"/>
        <end position="225"/>
    </location>
</feature>
<feature type="active site" evidence="1">
    <location>
        <position position="45"/>
    </location>
</feature>
<feature type="active site" evidence="1">
    <location>
        <position position="117"/>
    </location>
</feature>
<feature type="binding site" evidence="1">
    <location>
        <position position="41"/>
    </location>
    <ligand>
        <name>Mg(2+)</name>
        <dbReference type="ChEBI" id="CHEBI:18420"/>
    </ligand>
</feature>
<feature type="binding site" evidence="1">
    <location>
        <position position="114"/>
    </location>
    <ligand>
        <name>Mg(2+)</name>
        <dbReference type="ChEBI" id="CHEBI:18420"/>
    </ligand>
</feature>
<feature type="binding site" evidence="1">
    <location>
        <position position="117"/>
    </location>
    <ligand>
        <name>Mg(2+)</name>
        <dbReference type="ChEBI" id="CHEBI:18420"/>
    </ligand>
</feature>
<gene>
    <name evidence="1" type="primary">rnc</name>
    <name type="ordered locus">YPDSF_1553</name>
</gene>
<comment type="function">
    <text evidence="1">Digests double-stranded RNA. Involved in the processing of primary rRNA transcript to yield the immediate precursors to the large and small rRNAs (23S and 16S). Processes some mRNAs, and tRNAs when they are encoded in the rRNA operon. Processes pre-crRNA and tracrRNA of type II CRISPR loci if present in the organism.</text>
</comment>
<comment type="catalytic activity">
    <reaction evidence="1">
        <text>Endonucleolytic cleavage to 5'-phosphomonoester.</text>
        <dbReference type="EC" id="3.1.26.3"/>
    </reaction>
</comment>
<comment type="cofactor">
    <cofactor evidence="1">
        <name>Mg(2+)</name>
        <dbReference type="ChEBI" id="CHEBI:18420"/>
    </cofactor>
</comment>
<comment type="subunit">
    <text evidence="1">Homodimer.</text>
</comment>
<comment type="subcellular location">
    <subcellularLocation>
        <location evidence="1">Cytoplasm</location>
    </subcellularLocation>
</comment>
<comment type="similarity">
    <text evidence="1">Belongs to the ribonuclease III family.</text>
</comment>